<geneLocation type="chloroplast"/>
<protein>
    <recommendedName>
        <fullName evidence="1">ATP synthase subunit b, chloroplastic</fullName>
    </recommendedName>
    <alternativeName>
        <fullName evidence="1">ATP synthase F(0) sector subunit b</fullName>
    </alternativeName>
    <alternativeName>
        <fullName evidence="1">ATPase subunit I</fullName>
    </alternativeName>
</protein>
<gene>
    <name evidence="1" type="primary">atpF</name>
</gene>
<organism>
    <name type="scientific">Antithamnion sp.</name>
    <name type="common">Red alga</name>
    <dbReference type="NCBI Taxonomy" id="2767"/>
    <lineage>
        <taxon>Eukaryota</taxon>
        <taxon>Rhodophyta</taxon>
        <taxon>Florideophyceae</taxon>
        <taxon>Rhodymeniophycidae</taxon>
        <taxon>Ceramiales</taxon>
        <taxon>Ceramiaceae</taxon>
        <taxon>Antithamnion</taxon>
    </lineage>
</organism>
<sequence length="182" mass="20470">MENNFQVFRLISENFSEVSHSIGLNSDFLEANVLNIMLLLFGLIYVLKQFLGSLLTIRQEKVIFAISECEERLQQANNRLLESEKQLEQTQLVITQVLNDAEITAQKVRQSILDKGKIDVEKLIGASKASIVVAENQINQQIKQKITALAIQKVSSQLKAQVDTTMQAKIIDSSIIKLRGDI</sequence>
<feature type="chain" id="PRO_0000082402" description="ATP synthase subunit b, chloroplastic">
    <location>
        <begin position="1"/>
        <end position="182"/>
    </location>
</feature>
<feature type="transmembrane region" description="Helical" evidence="1">
    <location>
        <begin position="33"/>
        <end position="55"/>
    </location>
</feature>
<evidence type="ECO:0000255" key="1">
    <source>
        <dbReference type="HAMAP-Rule" id="MF_01398"/>
    </source>
</evidence>
<keyword id="KW-0066">ATP synthesis</keyword>
<keyword id="KW-0067">ATP-binding</keyword>
<keyword id="KW-0138">CF(0)</keyword>
<keyword id="KW-0150">Chloroplast</keyword>
<keyword id="KW-0375">Hydrogen ion transport</keyword>
<keyword id="KW-0406">Ion transport</keyword>
<keyword id="KW-0472">Membrane</keyword>
<keyword id="KW-0547">Nucleotide-binding</keyword>
<keyword id="KW-0934">Plastid</keyword>
<keyword id="KW-0793">Thylakoid</keyword>
<keyword id="KW-0812">Transmembrane</keyword>
<keyword id="KW-1133">Transmembrane helix</keyword>
<keyword id="KW-0813">Transport</keyword>
<dbReference type="EMBL" id="X63382">
    <property type="protein sequence ID" value="CAA44982.1"/>
    <property type="status" value="ALT_SEQ"/>
    <property type="molecule type" value="Genomic_DNA"/>
</dbReference>
<dbReference type="PIR" id="S26960">
    <property type="entry name" value="S26960"/>
</dbReference>
<dbReference type="SMR" id="Q02850"/>
<dbReference type="GO" id="GO:0009535">
    <property type="term" value="C:chloroplast thylakoid membrane"/>
    <property type="evidence" value="ECO:0007669"/>
    <property type="project" value="UniProtKB-SubCell"/>
</dbReference>
<dbReference type="GO" id="GO:0045259">
    <property type="term" value="C:proton-transporting ATP synthase complex"/>
    <property type="evidence" value="ECO:0007669"/>
    <property type="project" value="UniProtKB-KW"/>
</dbReference>
<dbReference type="GO" id="GO:0005524">
    <property type="term" value="F:ATP binding"/>
    <property type="evidence" value="ECO:0007669"/>
    <property type="project" value="UniProtKB-KW"/>
</dbReference>
<dbReference type="GO" id="GO:0046933">
    <property type="term" value="F:proton-transporting ATP synthase activity, rotational mechanism"/>
    <property type="evidence" value="ECO:0007669"/>
    <property type="project" value="UniProtKB-UniRule"/>
</dbReference>
<dbReference type="CDD" id="cd06503">
    <property type="entry name" value="ATP-synt_Fo_b"/>
    <property type="match status" value="1"/>
</dbReference>
<dbReference type="HAMAP" id="MF_01398">
    <property type="entry name" value="ATP_synth_b_bprime"/>
    <property type="match status" value="1"/>
</dbReference>
<dbReference type="InterPro" id="IPR002146">
    <property type="entry name" value="ATP_synth_b/b'su_bac/chlpt"/>
</dbReference>
<dbReference type="PANTHER" id="PTHR34264">
    <property type="entry name" value="ATP SYNTHASE SUBUNIT B, CHLOROPLASTIC"/>
    <property type="match status" value="1"/>
</dbReference>
<dbReference type="PANTHER" id="PTHR34264:SF3">
    <property type="entry name" value="ATP SYNTHASE SUBUNIT B, CHLOROPLASTIC"/>
    <property type="match status" value="1"/>
</dbReference>
<dbReference type="Pfam" id="PF00430">
    <property type="entry name" value="ATP-synt_B"/>
    <property type="match status" value="1"/>
</dbReference>
<name>ATPF_ANTSP</name>
<comment type="function">
    <text evidence="1">F(1)F(0) ATP synthase produces ATP from ADP in the presence of a proton or sodium gradient. F-type ATPases consist of two structural domains, F(1) containing the extramembraneous catalytic core and F(0) containing the membrane proton channel, linked together by a central stalk and a peripheral stalk. During catalysis, ATP synthesis in the catalytic domain of F(1) is coupled via a rotary mechanism of the central stalk subunits to proton translocation.</text>
</comment>
<comment type="function">
    <text evidence="1">Component of the F(0) channel, it forms part of the peripheral stalk, linking F(1) to F(0).</text>
</comment>
<comment type="subunit">
    <text evidence="1">F-type ATPases have 2 components, F(1) - the catalytic core - and F(0) - the membrane proton channel. F(1) has five subunits: alpha(3), beta(3), gamma(1), delta(1), epsilon(1). F(0) has four main subunits: a(1), b(1), b'(1) and c(10-14). The alpha and beta chains form an alternating ring which encloses part of the gamma chain. F(1) is attached to F(0) by a central stalk formed by the gamma and epsilon chains, while a peripheral stalk is formed by the delta, b and b' chains.</text>
</comment>
<comment type="subcellular location">
    <subcellularLocation>
        <location evidence="1">Plastid</location>
        <location evidence="1">Chloroplast thylakoid membrane</location>
        <topology evidence="1">Single-pass membrane protein</topology>
    </subcellularLocation>
</comment>
<comment type="miscellaneous">
    <text>In plastids the F-type ATPase is also known as CF(1)CF(0).</text>
</comment>
<comment type="similarity">
    <text evidence="1">Belongs to the ATPase B chain family.</text>
</comment>
<proteinExistence type="inferred from homology"/>
<reference key="1">
    <citation type="journal article" date="1992" name="J. Mol. Biol.">
        <title>Large ATP synthase operon of the red alga Antithamnion sp. resembles the corresponding operon in cyanobacteria.</title>
        <authorList>
            <person name="Kostrzewa M."/>
            <person name="Zetsche K."/>
        </authorList>
    </citation>
    <scope>NUCLEOTIDE SEQUENCE [GENOMIC DNA]</scope>
    <source>
        <strain>LB 95.79</strain>
    </source>
</reference>
<accession>Q02850</accession>